<reference key="1">
    <citation type="journal article" date="1993" name="Plant Mol. Biol.">
        <title>Circadian rhythmicity in the expression of a novel light-regulated rice gene.</title>
        <authorList>
            <person name="Reimmann C."/>
            <person name="Dudler R."/>
        </authorList>
    </citation>
    <scope>NUCLEOTIDE SEQUENCE [MRNA]</scope>
    <scope>INDUCTION</scope>
    <source>
        <strain>cv. Nohrin</strain>
    </source>
</reference>
<reference key="2">
    <citation type="journal article" date="2002" name="Nature">
        <title>The genome sequence and structure of rice chromosome 1.</title>
        <authorList>
            <person name="Sasaki T."/>
            <person name="Matsumoto T."/>
            <person name="Yamamoto K."/>
            <person name="Sakata K."/>
            <person name="Baba T."/>
            <person name="Katayose Y."/>
            <person name="Wu J."/>
            <person name="Niimura Y."/>
            <person name="Cheng Z."/>
            <person name="Nagamura Y."/>
            <person name="Antonio B.A."/>
            <person name="Kanamori H."/>
            <person name="Hosokawa S."/>
            <person name="Masukawa M."/>
            <person name="Arikawa K."/>
            <person name="Chiden Y."/>
            <person name="Hayashi M."/>
            <person name="Okamoto M."/>
            <person name="Ando T."/>
            <person name="Aoki H."/>
            <person name="Arita K."/>
            <person name="Hamada M."/>
            <person name="Harada C."/>
            <person name="Hijishita S."/>
            <person name="Honda M."/>
            <person name="Ichikawa Y."/>
            <person name="Idonuma A."/>
            <person name="Iijima M."/>
            <person name="Ikeda M."/>
            <person name="Ikeno M."/>
            <person name="Ito S."/>
            <person name="Ito T."/>
            <person name="Ito Y."/>
            <person name="Ito Y."/>
            <person name="Iwabuchi A."/>
            <person name="Kamiya K."/>
            <person name="Karasawa W."/>
            <person name="Katagiri S."/>
            <person name="Kikuta A."/>
            <person name="Kobayashi N."/>
            <person name="Kono I."/>
            <person name="Machita K."/>
            <person name="Maehara T."/>
            <person name="Mizuno H."/>
            <person name="Mizubayashi T."/>
            <person name="Mukai Y."/>
            <person name="Nagasaki H."/>
            <person name="Nakashima M."/>
            <person name="Nakama Y."/>
            <person name="Nakamichi Y."/>
            <person name="Nakamura M."/>
            <person name="Namiki N."/>
            <person name="Negishi M."/>
            <person name="Ohta I."/>
            <person name="Ono N."/>
            <person name="Saji S."/>
            <person name="Sakai K."/>
            <person name="Shibata M."/>
            <person name="Shimokawa T."/>
            <person name="Shomura A."/>
            <person name="Song J."/>
            <person name="Takazaki Y."/>
            <person name="Terasawa K."/>
            <person name="Tsuji K."/>
            <person name="Waki K."/>
            <person name="Yamagata H."/>
            <person name="Yamane H."/>
            <person name="Yoshiki S."/>
            <person name="Yoshihara R."/>
            <person name="Yukawa K."/>
            <person name="Zhong H."/>
            <person name="Iwama H."/>
            <person name="Endo T."/>
            <person name="Ito H."/>
            <person name="Hahn J.H."/>
            <person name="Kim H.-I."/>
            <person name="Eun M.-Y."/>
            <person name="Yano M."/>
            <person name="Jiang J."/>
            <person name="Gojobori T."/>
        </authorList>
    </citation>
    <scope>NUCLEOTIDE SEQUENCE [LARGE SCALE GENOMIC DNA]</scope>
    <source>
        <strain>cv. Nipponbare</strain>
    </source>
</reference>
<reference key="3">
    <citation type="journal article" date="2005" name="Nature">
        <title>The map-based sequence of the rice genome.</title>
        <authorList>
            <consortium name="International rice genome sequencing project (IRGSP)"/>
        </authorList>
    </citation>
    <scope>NUCLEOTIDE SEQUENCE [LARGE SCALE GENOMIC DNA]</scope>
    <source>
        <strain>cv. Nipponbare</strain>
    </source>
</reference>
<reference key="4">
    <citation type="journal article" date="2008" name="Nucleic Acids Res.">
        <title>The rice annotation project database (RAP-DB): 2008 update.</title>
        <authorList>
            <consortium name="The rice annotation project (RAP)"/>
        </authorList>
    </citation>
    <scope>GENOME REANNOTATION</scope>
    <source>
        <strain>cv. Nipponbare</strain>
    </source>
</reference>
<reference key="5">
    <citation type="journal article" date="2013" name="Rice">
        <title>Improvement of the Oryza sativa Nipponbare reference genome using next generation sequence and optical map data.</title>
        <authorList>
            <person name="Kawahara Y."/>
            <person name="de la Bastide M."/>
            <person name="Hamilton J.P."/>
            <person name="Kanamori H."/>
            <person name="McCombie W.R."/>
            <person name="Ouyang S."/>
            <person name="Schwartz D.C."/>
            <person name="Tanaka T."/>
            <person name="Wu J."/>
            <person name="Zhou S."/>
            <person name="Childs K.L."/>
            <person name="Davidson R.M."/>
            <person name="Lin H."/>
            <person name="Quesada-Ocampo L."/>
            <person name="Vaillancourt B."/>
            <person name="Sakai H."/>
            <person name="Lee S.S."/>
            <person name="Kim J."/>
            <person name="Numa H."/>
            <person name="Itoh T."/>
            <person name="Buell C.R."/>
            <person name="Matsumoto T."/>
        </authorList>
    </citation>
    <scope>GENOME REANNOTATION</scope>
    <source>
        <strain>cv. Nipponbare</strain>
    </source>
</reference>
<reference key="6">
    <citation type="journal article" date="2005" name="PLoS Biol.">
        <title>The genomes of Oryza sativa: a history of duplications.</title>
        <authorList>
            <person name="Yu J."/>
            <person name="Wang J."/>
            <person name="Lin W."/>
            <person name="Li S."/>
            <person name="Li H."/>
            <person name="Zhou J."/>
            <person name="Ni P."/>
            <person name="Dong W."/>
            <person name="Hu S."/>
            <person name="Zeng C."/>
            <person name="Zhang J."/>
            <person name="Zhang Y."/>
            <person name="Li R."/>
            <person name="Xu Z."/>
            <person name="Li S."/>
            <person name="Li X."/>
            <person name="Zheng H."/>
            <person name="Cong L."/>
            <person name="Lin L."/>
            <person name="Yin J."/>
            <person name="Geng J."/>
            <person name="Li G."/>
            <person name="Shi J."/>
            <person name="Liu J."/>
            <person name="Lv H."/>
            <person name="Li J."/>
            <person name="Wang J."/>
            <person name="Deng Y."/>
            <person name="Ran L."/>
            <person name="Shi X."/>
            <person name="Wang X."/>
            <person name="Wu Q."/>
            <person name="Li C."/>
            <person name="Ren X."/>
            <person name="Wang J."/>
            <person name="Wang X."/>
            <person name="Li D."/>
            <person name="Liu D."/>
            <person name="Zhang X."/>
            <person name="Ji Z."/>
            <person name="Zhao W."/>
            <person name="Sun Y."/>
            <person name="Zhang Z."/>
            <person name="Bao J."/>
            <person name="Han Y."/>
            <person name="Dong L."/>
            <person name="Ji J."/>
            <person name="Chen P."/>
            <person name="Wu S."/>
            <person name="Liu J."/>
            <person name="Xiao Y."/>
            <person name="Bu D."/>
            <person name="Tan J."/>
            <person name="Yang L."/>
            <person name="Ye C."/>
            <person name="Zhang J."/>
            <person name="Xu J."/>
            <person name="Zhou Y."/>
            <person name="Yu Y."/>
            <person name="Zhang B."/>
            <person name="Zhuang S."/>
            <person name="Wei H."/>
            <person name="Liu B."/>
            <person name="Lei M."/>
            <person name="Yu H."/>
            <person name="Li Y."/>
            <person name="Xu H."/>
            <person name="Wei S."/>
            <person name="He X."/>
            <person name="Fang L."/>
            <person name="Zhang Z."/>
            <person name="Zhang Y."/>
            <person name="Huang X."/>
            <person name="Su Z."/>
            <person name="Tong W."/>
            <person name="Li J."/>
            <person name="Tong Z."/>
            <person name="Li S."/>
            <person name="Ye J."/>
            <person name="Wang L."/>
            <person name="Fang L."/>
            <person name="Lei T."/>
            <person name="Chen C.-S."/>
            <person name="Chen H.-C."/>
            <person name="Xu Z."/>
            <person name="Li H."/>
            <person name="Huang H."/>
            <person name="Zhang F."/>
            <person name="Xu H."/>
            <person name="Li N."/>
            <person name="Zhao C."/>
            <person name="Li S."/>
            <person name="Dong L."/>
            <person name="Huang Y."/>
            <person name="Li L."/>
            <person name="Xi Y."/>
            <person name="Qi Q."/>
            <person name="Li W."/>
            <person name="Zhang B."/>
            <person name="Hu W."/>
            <person name="Zhang Y."/>
            <person name="Tian X."/>
            <person name="Jiao Y."/>
            <person name="Liang X."/>
            <person name="Jin J."/>
            <person name="Gao L."/>
            <person name="Zheng W."/>
            <person name="Hao B."/>
            <person name="Liu S.-M."/>
            <person name="Wang W."/>
            <person name="Yuan L."/>
            <person name="Cao M."/>
            <person name="McDermott J."/>
            <person name="Samudrala R."/>
            <person name="Wang J."/>
            <person name="Wong G.K.-S."/>
            <person name="Yang H."/>
        </authorList>
    </citation>
    <scope>NUCLEOTIDE SEQUENCE [LARGE SCALE GENOMIC DNA]</scope>
    <source>
        <strain>cv. Nipponbare</strain>
    </source>
</reference>
<reference key="7">
    <citation type="journal article" date="2003" name="Science">
        <title>Collection, mapping, and annotation of over 28,000 cDNA clones from japonica rice.</title>
        <authorList>
            <consortium name="The rice full-length cDNA consortium"/>
        </authorList>
    </citation>
    <scope>NUCLEOTIDE SEQUENCE [LARGE SCALE MRNA]</scope>
    <source>
        <strain>cv. Nipponbare</strain>
    </source>
</reference>
<reference key="8">
    <citation type="journal article" date="2016" name="Plant Cell">
        <title>LIGHT-INDUCED RICE1 regulates light-dependent attachment of LEAF-TYPE FERREDOXIN-NADP+ OXIDOREDUCTASE to the thylakoid membrane in rice and Arabidopsis.</title>
        <authorList>
            <person name="Yang C."/>
            <person name="Hu H."/>
            <person name="Ren H."/>
            <person name="Kong Y."/>
            <person name="Lin H."/>
            <person name="Guo J."/>
            <person name="Wang L."/>
            <person name="He Y."/>
            <person name="Ding X."/>
            <person name="Grabsztunowicz M."/>
            <person name="Mulo P."/>
            <person name="Chen T."/>
            <person name="Liu Y."/>
            <person name="Wu Z."/>
            <person name="Wu Y."/>
            <person name="Mao C."/>
            <person name="Wu P."/>
            <person name="Mo X."/>
        </authorList>
    </citation>
    <scope>FUNCTION</scope>
    <scope>DISRUPTION PHENOTYPE</scope>
    <scope>REPRESSION BY LIGHT</scope>
    <scope>INTERACTION WITH LFNR1 AND LFNR2</scope>
    <scope>DISULFIDE BOND</scope>
    <scope>SUBCELLULAR LOCATION</scope>
    <source>
        <strain>cv. Nipponbare</strain>
    </source>
</reference>
<keyword id="KW-0150">Chloroplast</keyword>
<keyword id="KW-1015">Disulfide bond</keyword>
<keyword id="KW-0472">Membrane</keyword>
<keyword id="KW-0934">Plastid</keyword>
<keyword id="KW-1185">Reference proteome</keyword>
<keyword id="KW-0677">Repeat</keyword>
<keyword id="KW-0793">Thylakoid</keyword>
<keyword id="KW-0809">Transit peptide</keyword>
<gene>
    <name type="primary">LIR1</name>
    <name type="ordered locus">Os01g0102900</name>
    <name type="ordered locus">LOC_Os01g01340</name>
    <name evidence="4" type="ORF">OsJ_00023</name>
    <name type="ORF">P0436E04.2</name>
    <name type="ORF">P0455C04.23</name>
    <name type="ORF">P0672D08.50</name>
</gene>
<organism>
    <name type="scientific">Oryza sativa subsp. japonica</name>
    <name type="common">Rice</name>
    <dbReference type="NCBI Taxonomy" id="39947"/>
    <lineage>
        <taxon>Eukaryota</taxon>
        <taxon>Viridiplantae</taxon>
        <taxon>Streptophyta</taxon>
        <taxon>Embryophyta</taxon>
        <taxon>Tracheophyta</taxon>
        <taxon>Spermatophyta</taxon>
        <taxon>Magnoliopsida</taxon>
        <taxon>Liliopsida</taxon>
        <taxon>Poales</taxon>
        <taxon>Poaceae</taxon>
        <taxon>BOP clade</taxon>
        <taxon>Oryzoideae</taxon>
        <taxon>Oryzeae</taxon>
        <taxon>Oryzinae</taxon>
        <taxon>Oryza</taxon>
        <taxon>Oryza sativa</taxon>
    </lineage>
</organism>
<sequence>MQTAASSVVGLSAVLPAAVKGRSLQIQAPRRVALRVRAAAAAVAVEAAEVDYSSNISVFPMEACDLIGGEACNVQMYPEAKLSSSAAVAVSRAAAEEVDRDYLSYDEPTTVFPEEACDDLGGEFCKAT</sequence>
<protein>
    <recommendedName>
        <fullName>Light-regulated protein, chloroplastic</fullName>
    </recommendedName>
</protein>
<dbReference type="EMBL" id="X68807">
    <property type="protein sequence ID" value="CAA48706.1"/>
    <property type="molecule type" value="mRNA"/>
</dbReference>
<dbReference type="EMBL" id="AP002818">
    <property type="protein sequence ID" value="BAB16320.1"/>
    <property type="molecule type" value="Genomic_DNA"/>
</dbReference>
<dbReference type="EMBL" id="AP002969">
    <property type="protein sequence ID" value="BAB92145.1"/>
    <property type="molecule type" value="Genomic_DNA"/>
</dbReference>
<dbReference type="EMBL" id="AP003727">
    <property type="protein sequence ID" value="BAD45513.1"/>
    <property type="molecule type" value="Genomic_DNA"/>
</dbReference>
<dbReference type="EMBL" id="AP008207">
    <property type="protein sequence ID" value="BAF03667.1"/>
    <property type="molecule type" value="Genomic_DNA"/>
</dbReference>
<dbReference type="EMBL" id="AP014957">
    <property type="protein sequence ID" value="BAS69939.1"/>
    <property type="molecule type" value="Genomic_DNA"/>
</dbReference>
<dbReference type="EMBL" id="CM000138">
    <property type="protein sequence ID" value="EAZ10195.1"/>
    <property type="molecule type" value="Genomic_DNA"/>
</dbReference>
<dbReference type="EMBL" id="AK067670">
    <property type="protein sequence ID" value="BAG90531.1"/>
    <property type="molecule type" value="mRNA"/>
</dbReference>
<dbReference type="EMBL" id="AK120535">
    <property type="protein sequence ID" value="BAH00058.1"/>
    <property type="molecule type" value="mRNA"/>
</dbReference>
<dbReference type="PIR" id="S33632">
    <property type="entry name" value="S33632"/>
</dbReference>
<dbReference type="RefSeq" id="XP_015617278.1">
    <property type="nucleotide sequence ID" value="XM_015761792.1"/>
</dbReference>
<dbReference type="FunCoup" id="Q03200">
    <property type="interactions" value="1316"/>
</dbReference>
<dbReference type="STRING" id="39947.Q03200"/>
<dbReference type="PaxDb" id="39947-Q03200"/>
<dbReference type="EnsemblPlants" id="Os01t0102900-01">
    <property type="protein sequence ID" value="Os01t0102900-01"/>
    <property type="gene ID" value="Os01g0102900"/>
</dbReference>
<dbReference type="Gramene" id="Os01t0102900-01">
    <property type="protein sequence ID" value="Os01t0102900-01"/>
    <property type="gene ID" value="Os01g0102900"/>
</dbReference>
<dbReference type="KEGG" id="dosa:Os01g0102900"/>
<dbReference type="eggNOG" id="ENOG502S43X">
    <property type="taxonomic scope" value="Eukaryota"/>
</dbReference>
<dbReference type="HOGENOM" id="CLU_154099_0_0_1"/>
<dbReference type="InParanoid" id="Q03200"/>
<dbReference type="OMA" id="EFCERPY"/>
<dbReference type="OrthoDB" id="2011897at2759"/>
<dbReference type="Proteomes" id="UP000000763">
    <property type="component" value="Chromosome 1"/>
</dbReference>
<dbReference type="Proteomes" id="UP000007752">
    <property type="component" value="Chromosome 1"/>
</dbReference>
<dbReference type="Proteomes" id="UP000059680">
    <property type="component" value="Chromosome 1"/>
</dbReference>
<dbReference type="GO" id="GO:0009941">
    <property type="term" value="C:chloroplast envelope"/>
    <property type="evidence" value="ECO:0000314"/>
    <property type="project" value="UniProtKB"/>
</dbReference>
<dbReference type="GO" id="GO:0009570">
    <property type="term" value="C:chloroplast stroma"/>
    <property type="evidence" value="ECO:0000314"/>
    <property type="project" value="UniProtKB"/>
</dbReference>
<dbReference type="GO" id="GO:0009535">
    <property type="term" value="C:chloroplast thylakoid membrane"/>
    <property type="evidence" value="ECO:0000314"/>
    <property type="project" value="UniProtKB"/>
</dbReference>
<dbReference type="GO" id="GO:0098807">
    <property type="term" value="C:chloroplast thylakoid membrane protein complex"/>
    <property type="evidence" value="ECO:0000314"/>
    <property type="project" value="UniProtKB"/>
</dbReference>
<dbReference type="GO" id="GO:0071482">
    <property type="term" value="P:cellular response to light stimulus"/>
    <property type="evidence" value="ECO:0000270"/>
    <property type="project" value="UniProtKB"/>
</dbReference>
<dbReference type="GO" id="GO:0007623">
    <property type="term" value="P:circadian rhythm"/>
    <property type="evidence" value="ECO:0000270"/>
    <property type="project" value="UniProtKB"/>
</dbReference>
<dbReference type="InterPro" id="IPR009856">
    <property type="entry name" value="Lir1"/>
</dbReference>
<dbReference type="PANTHER" id="PTHR36762">
    <property type="entry name" value="LIGHT-REGULATED PROTEIN 1, CHLOROPLASTIC"/>
    <property type="match status" value="1"/>
</dbReference>
<dbReference type="PANTHER" id="PTHR36762:SF2">
    <property type="entry name" value="LIGHT-REGULATED PROTEIN 1, CHLOROPLASTIC"/>
    <property type="match status" value="1"/>
</dbReference>
<dbReference type="Pfam" id="PF07207">
    <property type="entry name" value="Lir1"/>
    <property type="match status" value="1"/>
</dbReference>
<name>LIRP1_ORYSJ</name>
<proteinExistence type="evidence at protein level"/>
<comment type="function">
    <text evidence="2">Thylakoid-determinant subunit of high molecular weight LFNRs-containing protein complexes.</text>
</comment>
<comment type="subunit">
    <text evidence="2">Component of high molecular weight thylakoid LFNRs-containing protein complexes containing LIR1, LFNR1, LFNR2, TIC62 and TROL proteins. Interacts directly with LFNR1 and LFNR2; LIR1 increases the affinity of LFNR1 and LFNR2 for TIC62 and subsequent thylakoid relocalization.</text>
</comment>
<comment type="subcellular location">
    <subcellularLocation>
        <location evidence="2">Plastid</location>
        <location evidence="2">Chloroplast thylakoid membrane</location>
        <topology evidence="2">Peripheral membrane protein</topology>
        <orientation evidence="2">Stromal side</orientation>
    </subcellularLocation>
    <subcellularLocation>
        <location evidence="2">Plastid</location>
        <location evidence="2">Chloroplast envelope</location>
    </subcellularLocation>
    <subcellularLocation>
        <location evidence="2">Plastid</location>
        <location evidence="2">Chloroplast stroma</location>
    </subcellularLocation>
</comment>
<comment type="induction">
    <text evidence="2 3">Expression is controlled by light and by a circadian clock (PubMed:26941088, PubMed:8499615). Transcripts accumulate progressively during the day and fade out during the night, however, mRNA stability is enhanced during the night. Low levels during the day, accumulates during the night (at protein level). Rapidly degraded upon illumination (at protein level); this degradation coincides with the release of the LFNR from the thylakoid membrane (PubMed:26941088).</text>
</comment>
<comment type="PTM">
    <text evidence="2">May form interchain disulfide bonds with LFNR1 and LFNR2.</text>
</comment>
<comment type="disruption phenotype">
    <text evidence="2">Retarded growth. Reduced photosynthetic electron transfer. Marked decrease in the accumulation of LFNR1 and LFNR2-containing thylakoid protein complexes.</text>
</comment>
<evidence type="ECO:0000255" key="1"/>
<evidence type="ECO:0000269" key="2">
    <source>
    </source>
</evidence>
<evidence type="ECO:0000269" key="3">
    <source>
    </source>
</evidence>
<evidence type="ECO:0000312" key="4">
    <source>
        <dbReference type="EMBL" id="EAZ10195.1"/>
    </source>
</evidence>
<accession>Q03200</accession>
<accession>Q0JRG1</accession>
<accession>Q7F737</accession>
<feature type="transit peptide" description="Chloroplast" evidence="1">
    <location>
        <begin position="1"/>
        <end status="unknown"/>
    </location>
</feature>
<feature type="chain" id="PRO_0000021599" description="Light-regulated protein, chloroplastic" evidence="1">
    <location>
        <begin status="unknown"/>
        <end position="128"/>
    </location>
</feature>
<feature type="repeat" description="1">
    <location>
        <begin position="58"/>
        <end position="72"/>
    </location>
</feature>
<feature type="repeat" description="2">
    <location>
        <begin position="111"/>
        <end position="125"/>
    </location>
</feature>
<feature type="region of interest" description="2 X 15 AA approximate repeats">
    <location>
        <begin position="58"/>
        <end position="125"/>
    </location>
</feature>